<sequence length="252" mass="29453">MEDFVRQCFNPMIVELAEKAMKEYGEDLKIETNKFAAICTHLEVCFMYSDFHFINEQGESIIVEPEDPNALLKHRFEIIEGRDRTMAWTVVNSICNTTGAEKPKFLPDLYDYKENRFIEIGVTRREVHIYYLEKANKIKSEKTHIHIFSFTGEEMATKADYTLDEESRARIKTRLFTIRQEMASRGLWDSFVSPREAKKQLKKDLKSQEQCAGSLTKVSRRTSPALRILEPMWMDSNRTATLRASFLKCPKK</sequence>
<gene>
    <name type="primary">PA</name>
</gene>
<organism>
    <name type="scientific">Influenza A virus (strain A/India/6263/1980 H1N1)</name>
    <dbReference type="NCBI Taxonomy" id="393562"/>
    <lineage>
        <taxon>Viruses</taxon>
        <taxon>Riboviria</taxon>
        <taxon>Orthornavirae</taxon>
        <taxon>Negarnaviricota</taxon>
        <taxon>Polyploviricotina</taxon>
        <taxon>Insthoviricetes</taxon>
        <taxon>Articulavirales</taxon>
        <taxon>Orthomyxoviridae</taxon>
        <taxon>Alphainfluenzavirus</taxon>
        <taxon>Alphainfluenzavirus influenzae</taxon>
        <taxon>Influenza A virus</taxon>
    </lineage>
</organism>
<organismHost>
    <name type="scientific">Aves</name>
    <dbReference type="NCBI Taxonomy" id="8782"/>
</organismHost>
<organismHost>
    <name type="scientific">Homo sapiens</name>
    <name type="common">Human</name>
    <dbReference type="NCBI Taxonomy" id="9606"/>
</organismHost>
<organismHost>
    <name type="scientific">Sus scrofa</name>
    <name type="common">Pig</name>
    <dbReference type="NCBI Taxonomy" id="9823"/>
</organismHost>
<proteinExistence type="inferred from homology"/>
<accession>P0DJS0</accession>
<dbReference type="EMBL" id="CY020458">
    <property type="status" value="NOT_ANNOTATED_CDS"/>
    <property type="molecule type" value="Viral_cRNA"/>
</dbReference>
<dbReference type="SMR" id="P0DJS0"/>
<dbReference type="Proteomes" id="UP000008580">
    <property type="component" value="Genome"/>
</dbReference>
<dbReference type="GO" id="GO:0003723">
    <property type="term" value="F:RNA binding"/>
    <property type="evidence" value="ECO:0007669"/>
    <property type="project" value="InterPro"/>
</dbReference>
<dbReference type="GO" id="GO:0039694">
    <property type="term" value="P:viral RNA genome replication"/>
    <property type="evidence" value="ECO:0007669"/>
    <property type="project" value="InterPro"/>
</dbReference>
<dbReference type="GO" id="GO:0075523">
    <property type="term" value="P:viral translational frameshifting"/>
    <property type="evidence" value="ECO:0007669"/>
    <property type="project" value="UniProtKB-KW"/>
</dbReference>
<dbReference type="FunFam" id="3.40.91.90:FF:000001">
    <property type="entry name" value="Polymerase acidic protein"/>
    <property type="match status" value="1"/>
</dbReference>
<dbReference type="Gene3D" id="3.40.91.90">
    <property type="entry name" value="Influenza RNA-dependent RNA polymerase subunit PA, endonuclease domain"/>
    <property type="match status" value="1"/>
</dbReference>
<dbReference type="InterPro" id="IPR001009">
    <property type="entry name" value="PA/PA-X"/>
</dbReference>
<dbReference type="InterPro" id="IPR038372">
    <property type="entry name" value="PA/PA-X_sf"/>
</dbReference>
<dbReference type="Pfam" id="PF00603">
    <property type="entry name" value="Flu_PA"/>
    <property type="match status" value="1"/>
</dbReference>
<keyword id="KW-1132">Decay of host mRNAs by virus</keyword>
<keyword id="KW-1262">Eukaryotic host gene expression shutoff by virus</keyword>
<keyword id="KW-1035">Host cytoplasm</keyword>
<keyword id="KW-1190">Host gene expression shutoff by virus</keyword>
<keyword id="KW-1192">Host mRNA suppression by virus</keyword>
<keyword id="KW-1048">Host nucleus</keyword>
<keyword id="KW-0945">Host-virus interaction</keyword>
<keyword id="KW-0688">Ribosomal frameshifting</keyword>
<feature type="chain" id="PRO_0000419383" description="Protein PA-X">
    <location>
        <begin position="1"/>
        <end position="252"/>
    </location>
</feature>
<feature type="active site" evidence="2">
    <location>
        <position position="80"/>
    </location>
</feature>
<feature type="active site" evidence="2">
    <location>
        <position position="108"/>
    </location>
</feature>
<feature type="site" description="Important for efficient shutoff activity and nuclear localization" evidence="4">
    <location>
        <position position="195"/>
    </location>
</feature>
<feature type="site" description="Important for efficient shutoff activity and nuclear localization" evidence="4">
    <location>
        <position position="198"/>
    </location>
</feature>
<feature type="site" description="Important for efficient shutoff activity and nuclear localization" evidence="4">
    <location>
        <position position="199"/>
    </location>
</feature>
<feature type="site" description="Important for efficient shutoff activity" evidence="3">
    <location>
        <position position="202"/>
    </location>
</feature>
<feature type="site" description="Important for efficient shutoff activity" evidence="3">
    <location>
        <position position="203"/>
    </location>
</feature>
<feature type="site" description="Important for efficient shutoff activity" evidence="3">
    <location>
        <position position="206"/>
    </location>
</feature>
<comment type="function">
    <text evidence="1 4">Plays a major role in the shutoff of the host protein expression by cleaving mRNAs probably via an endonuclease activity. This host shutoff allows the virus to escape from the host antiviral response (By similarity). Hijacks host RNA splicing machinery to selectively target host RNAs containing introns for destruction. This may explain the preferential degradation of RNAs that have undergone co- or post-transcriptional processing (By similarity).</text>
</comment>
<comment type="subcellular location">
    <subcellularLocation>
        <location evidence="4">Host cytoplasm</location>
    </subcellularLocation>
    <subcellularLocation>
        <location evidence="4">Host nucleus</location>
    </subcellularLocation>
</comment>
<comment type="alternative products">
    <event type="ribosomal frameshifting"/>
    <isoform>
        <id>P0DJS0-1</id>
        <name>PA-X</name>
        <sequence type="displayed"/>
    </isoform>
    <isoform>
        <id>A4GCK4-1</id>
        <name>PA</name>
        <sequence type="external"/>
    </isoform>
</comment>
<comment type="domain">
    <text evidence="1 4">The probable endonuclease active site in the N-terminus and the basic amino acid cluster in the C-terminus are important for the shutoff activity. The C-terminus acts as a nuclear localization signal (By similarity). The C-terminus is recruited to host protein complexes involved in nuclear Pol II RNA processing (By similarity).</text>
</comment>
<comment type="similarity">
    <text evidence="5">Belongs to the influenza viruses PA-X family.</text>
</comment>
<name>PAX_I80AA</name>
<evidence type="ECO:0000250" key="1">
    <source>
        <dbReference type="UniProtKB" id="P0CK64"/>
    </source>
</evidence>
<evidence type="ECO:0000250" key="2">
    <source>
        <dbReference type="UniProtKB" id="P0CK68"/>
    </source>
</evidence>
<evidence type="ECO:0000250" key="3">
    <source>
        <dbReference type="UniProtKB" id="P0DJW8"/>
    </source>
</evidence>
<evidence type="ECO:0000250" key="4">
    <source>
        <dbReference type="UniProtKB" id="P0DXO5"/>
    </source>
</evidence>
<evidence type="ECO:0000305" key="5"/>
<reference key="1">
    <citation type="submission" date="2007-03" db="EMBL/GenBank/DDBJ databases">
        <title>The NIAID influenza genome sequencing project.</title>
        <authorList>
            <person name="Ghedin E."/>
            <person name="Spiro D."/>
            <person name="Miller N."/>
            <person name="Zaborsky J."/>
            <person name="Feldblyum T."/>
            <person name="Subbu V."/>
            <person name="Shumway M."/>
            <person name="Sparenborg J."/>
            <person name="Groveman L."/>
            <person name="Halpin R."/>
            <person name="Sitz J."/>
            <person name="Koo H."/>
            <person name="Salzberg S.L."/>
            <person name="Webster R.G."/>
            <person name="Hoffmann E."/>
            <person name="Krauss S."/>
            <person name="Naeve C."/>
            <person name="Bao Y."/>
            <person name="Bolotov P."/>
            <person name="Dernovoy D."/>
            <person name="Kiryutin B."/>
            <person name="Lipman D.J."/>
            <person name="Tatusova T."/>
        </authorList>
    </citation>
    <scope>NUCLEOTIDE SEQUENCE [GENOMIC RNA]</scope>
</reference>
<reference key="2">
    <citation type="submission" date="2007-03" db="EMBL/GenBank/DDBJ databases">
        <authorList>
            <consortium name="The NIAID Influenza Genome Sequencing Consortium"/>
        </authorList>
    </citation>
    <scope>NUCLEOTIDE SEQUENCE [GENOMIC RNA]</scope>
</reference>
<protein>
    <recommendedName>
        <fullName>Protein PA-X</fullName>
    </recommendedName>
</protein>